<organism>
    <name type="scientific">Acidianus two-tailed virus</name>
    <name type="common">ATV</name>
    <dbReference type="NCBI Taxonomy" id="315953"/>
    <lineage>
        <taxon>Viruses</taxon>
        <taxon>Viruses incertae sedis</taxon>
        <taxon>Bicaudaviridae</taxon>
        <taxon>Bicaudavirus</taxon>
    </lineage>
</organism>
<comment type="subcellular location">
    <subcellularLocation>
        <location>Virion</location>
    </subcellularLocation>
</comment>
<dbReference type="EMBL" id="AJ888457">
    <property type="protein sequence ID" value="CAI59913.1"/>
    <property type="molecule type" value="Genomic_DNA"/>
</dbReference>
<dbReference type="RefSeq" id="YP_319897.1">
    <property type="nucleotide sequence ID" value="NC_007409.1"/>
</dbReference>
<dbReference type="GeneID" id="4484269"/>
<dbReference type="KEGG" id="vg:4484269"/>
<dbReference type="OrthoDB" id="2616at10239"/>
<dbReference type="Proteomes" id="UP000002150">
    <property type="component" value="Genome"/>
</dbReference>
<dbReference type="GO" id="GO:0044423">
    <property type="term" value="C:virion component"/>
    <property type="evidence" value="ECO:0007669"/>
    <property type="project" value="UniProtKB-KW"/>
</dbReference>
<dbReference type="Gene3D" id="3.40.50.300">
    <property type="entry name" value="P-loop containing nucleotide triphosphate hydrolases"/>
    <property type="match status" value="1"/>
</dbReference>
<dbReference type="InterPro" id="IPR045427">
    <property type="entry name" value="MoxR"/>
</dbReference>
<dbReference type="InterPro" id="IPR027417">
    <property type="entry name" value="P-loop_NTPase"/>
</dbReference>
<dbReference type="InterPro" id="IPR050513">
    <property type="entry name" value="RavA_ATPases"/>
</dbReference>
<dbReference type="PANTHER" id="PTHR32204">
    <property type="entry name" value="ATPASE RAVA"/>
    <property type="match status" value="1"/>
</dbReference>
<dbReference type="PANTHER" id="PTHR32204:SF0">
    <property type="entry name" value="ATPASE RAVA"/>
    <property type="match status" value="1"/>
</dbReference>
<dbReference type="Pfam" id="PF20030">
    <property type="entry name" value="bpMoxR"/>
    <property type="match status" value="1"/>
</dbReference>
<dbReference type="SUPFAM" id="SSF52540">
    <property type="entry name" value="P-loop containing nucleoside triphosphate hydrolases"/>
    <property type="match status" value="1"/>
</dbReference>
<sequence length="618" mass="69350">MSQQPSGQGISEKIQNLASKYGQMLNELDKAVVGRYDSKTAVLLGLMTGFPTLLVGDRGVAKTMLIELLPKVIEGLNDKDVFVVQVSEYTDPSEIFGVPDIQKLVNGEGFDLKTDGFLPSAKVAFIDEIFYTSEKVRSTLLRAINEKKINVFGKEIKLPWIAFYAAANKVDLENPSDLALLDRFNIRGFILDIPFIMDNVDKLADETMQVMSASENPELKKVITLNDVEETRKVLDQMVRDFFNSKEALDLLKKVYYVIGDILASLKDTDAYESFYRSADEDYTHISTRARKRLNYVAASIALVRGATKPTYLDYLLALLFTLPVDVQSFKIVRDKIRDEWNKAVSGQEDTDATKVILDYLNDRLLTEAFIKASKMFDTSRNAIENLGKKIPLAQPFENREPTLVSSLPKIVEFLTRPEPISYSIWLMTKDKNGKINVGREKTGELSGNPLQKLEELLKLLESYRKVLDEADSPEERKTLILGLSKLVVNFGSTSSYQNGYKVPFLTLLDAISLFINNLKSTDVQKVIEQVVNDAKNNALKSISNGAPEVSGWEVFAPLLEQYGMKVPGILEAKRQIEDRAKGLSKNLDNTVTEIMNAGEKIMEMDDEMTKTFISLAS</sequence>
<protein>
    <recommendedName>
        <fullName>Structural protein ORF618</fullName>
    </recommendedName>
</protein>
<keyword id="KW-0175">Coiled coil</keyword>
<keyword id="KW-1185">Reference proteome</keyword>
<keyword id="KW-0946">Virion</keyword>
<evidence type="ECO:0000255" key="1"/>
<reference key="1">
    <citation type="journal article" date="2005" name="Nature">
        <title>Virology: independent virus development outside a host.</title>
        <authorList>
            <person name="Haring M."/>
            <person name="Vestergaard G."/>
            <person name="Rachel R."/>
            <person name="Chen L."/>
            <person name="Garrett R.A."/>
            <person name="Prangishvili D."/>
        </authorList>
    </citation>
    <scope>NUCLEOTIDE SEQUENCE [GENOMIC DNA]</scope>
</reference>
<feature type="chain" id="PRO_0000389040" description="Structural protein ORF618">
    <location>
        <begin position="1"/>
        <end position="618"/>
    </location>
</feature>
<feature type="coiled-coil region" evidence="1">
    <location>
        <begin position="570"/>
        <end position="598"/>
    </location>
</feature>
<accession>Q3V4Q1</accession>
<proteinExistence type="predicted"/>
<name>Y618_ATV</name>
<organismHost>
    <name type="scientific">Acidianus convivator</name>
    <dbReference type="NCBI Taxonomy" id="269667"/>
</organismHost>